<protein>
    <recommendedName>
        <fullName evidence="1">Large ribosomal subunit protein uL22</fullName>
    </recommendedName>
    <alternativeName>
        <fullName evidence="2">50S ribosomal protein L22</fullName>
    </alternativeName>
</protein>
<evidence type="ECO:0000255" key="1">
    <source>
        <dbReference type="HAMAP-Rule" id="MF_01331"/>
    </source>
</evidence>
<evidence type="ECO:0000305" key="2"/>
<reference key="1">
    <citation type="journal article" date="2003" name="Nat. Biotechnol.">
        <title>The genome sequence of the entomopathogenic bacterium Photorhabdus luminescens.</title>
        <authorList>
            <person name="Duchaud E."/>
            <person name="Rusniok C."/>
            <person name="Frangeul L."/>
            <person name="Buchrieser C."/>
            <person name="Givaudan A."/>
            <person name="Taourit S."/>
            <person name="Bocs S."/>
            <person name="Boursaux-Eude C."/>
            <person name="Chandler M."/>
            <person name="Charles J.-F."/>
            <person name="Dassa E."/>
            <person name="Derose R."/>
            <person name="Derzelle S."/>
            <person name="Freyssinet G."/>
            <person name="Gaudriault S."/>
            <person name="Medigue C."/>
            <person name="Lanois A."/>
            <person name="Powell K."/>
            <person name="Siguier P."/>
            <person name="Vincent R."/>
            <person name="Wingate V."/>
            <person name="Zouine M."/>
            <person name="Glaser P."/>
            <person name="Boemare N."/>
            <person name="Danchin A."/>
            <person name="Kunst F."/>
        </authorList>
    </citation>
    <scope>NUCLEOTIDE SEQUENCE [LARGE SCALE GENOMIC DNA]</scope>
    <source>
        <strain>DSM 15139 / CIP 105565 / TT01</strain>
    </source>
</reference>
<keyword id="KW-1185">Reference proteome</keyword>
<keyword id="KW-0687">Ribonucleoprotein</keyword>
<keyword id="KW-0689">Ribosomal protein</keyword>
<keyword id="KW-0694">RNA-binding</keyword>
<keyword id="KW-0699">rRNA-binding</keyword>
<comment type="function">
    <text evidence="1">This protein binds specifically to 23S rRNA; its binding is stimulated by other ribosomal proteins, e.g. L4, L17, and L20. It is important during the early stages of 50S assembly. It makes multiple contacts with different domains of the 23S rRNA in the assembled 50S subunit and ribosome (By similarity).</text>
</comment>
<comment type="function">
    <text evidence="1">The globular domain of the protein is located near the polypeptide exit tunnel on the outside of the subunit, while an extended beta-hairpin is found that lines the wall of the exit tunnel in the center of the 70S ribosome.</text>
</comment>
<comment type="subunit">
    <text evidence="1">Part of the 50S ribosomal subunit.</text>
</comment>
<comment type="similarity">
    <text evidence="1">Belongs to the universal ribosomal protein uL22 family.</text>
</comment>
<gene>
    <name evidence="1" type="primary">rplV</name>
    <name type="ordered locus">plu4721</name>
</gene>
<dbReference type="EMBL" id="BX571874">
    <property type="protein sequence ID" value="CAE17093.1"/>
    <property type="molecule type" value="Genomic_DNA"/>
</dbReference>
<dbReference type="RefSeq" id="WP_011148790.1">
    <property type="nucleotide sequence ID" value="NC_005126.1"/>
</dbReference>
<dbReference type="SMR" id="Q7MYF6"/>
<dbReference type="STRING" id="243265.plu4721"/>
<dbReference type="GeneID" id="88808153"/>
<dbReference type="KEGG" id="plu:plu4721"/>
<dbReference type="eggNOG" id="COG0091">
    <property type="taxonomic scope" value="Bacteria"/>
</dbReference>
<dbReference type="HOGENOM" id="CLU_083987_3_3_6"/>
<dbReference type="OrthoDB" id="9805969at2"/>
<dbReference type="Proteomes" id="UP000002514">
    <property type="component" value="Chromosome"/>
</dbReference>
<dbReference type="GO" id="GO:0022625">
    <property type="term" value="C:cytosolic large ribosomal subunit"/>
    <property type="evidence" value="ECO:0007669"/>
    <property type="project" value="TreeGrafter"/>
</dbReference>
<dbReference type="GO" id="GO:0019843">
    <property type="term" value="F:rRNA binding"/>
    <property type="evidence" value="ECO:0007669"/>
    <property type="project" value="UniProtKB-UniRule"/>
</dbReference>
<dbReference type="GO" id="GO:0003735">
    <property type="term" value="F:structural constituent of ribosome"/>
    <property type="evidence" value="ECO:0007669"/>
    <property type="project" value="InterPro"/>
</dbReference>
<dbReference type="GO" id="GO:0006412">
    <property type="term" value="P:translation"/>
    <property type="evidence" value="ECO:0007669"/>
    <property type="project" value="UniProtKB-UniRule"/>
</dbReference>
<dbReference type="CDD" id="cd00336">
    <property type="entry name" value="Ribosomal_L22"/>
    <property type="match status" value="1"/>
</dbReference>
<dbReference type="FunFam" id="3.90.470.10:FF:000001">
    <property type="entry name" value="50S ribosomal protein L22"/>
    <property type="match status" value="1"/>
</dbReference>
<dbReference type="Gene3D" id="3.90.470.10">
    <property type="entry name" value="Ribosomal protein L22/L17"/>
    <property type="match status" value="1"/>
</dbReference>
<dbReference type="HAMAP" id="MF_01331_B">
    <property type="entry name" value="Ribosomal_uL22_B"/>
    <property type="match status" value="1"/>
</dbReference>
<dbReference type="InterPro" id="IPR001063">
    <property type="entry name" value="Ribosomal_uL22"/>
</dbReference>
<dbReference type="InterPro" id="IPR005727">
    <property type="entry name" value="Ribosomal_uL22_bac/chlpt-type"/>
</dbReference>
<dbReference type="InterPro" id="IPR047867">
    <property type="entry name" value="Ribosomal_uL22_bac/org-type"/>
</dbReference>
<dbReference type="InterPro" id="IPR018260">
    <property type="entry name" value="Ribosomal_uL22_CS"/>
</dbReference>
<dbReference type="InterPro" id="IPR036394">
    <property type="entry name" value="Ribosomal_uL22_sf"/>
</dbReference>
<dbReference type="NCBIfam" id="TIGR01044">
    <property type="entry name" value="rplV_bact"/>
    <property type="match status" value="1"/>
</dbReference>
<dbReference type="PANTHER" id="PTHR13501">
    <property type="entry name" value="CHLOROPLAST 50S RIBOSOMAL PROTEIN L22-RELATED"/>
    <property type="match status" value="1"/>
</dbReference>
<dbReference type="PANTHER" id="PTHR13501:SF8">
    <property type="entry name" value="LARGE RIBOSOMAL SUBUNIT PROTEIN UL22M"/>
    <property type="match status" value="1"/>
</dbReference>
<dbReference type="Pfam" id="PF00237">
    <property type="entry name" value="Ribosomal_L22"/>
    <property type="match status" value="1"/>
</dbReference>
<dbReference type="SUPFAM" id="SSF54843">
    <property type="entry name" value="Ribosomal protein L22"/>
    <property type="match status" value="1"/>
</dbReference>
<dbReference type="PROSITE" id="PS00464">
    <property type="entry name" value="RIBOSOMAL_L22"/>
    <property type="match status" value="1"/>
</dbReference>
<sequence length="110" mass="12186">METIAKHRHARSSAQKVRLVADLIRGKKVSQALETLTYTNKKAAGLVKKVLESAIANAEHNDGADIDDLKVTKIFVDEGPTMKRIMPRAKGRADRILKRSSHITVVVSDR</sequence>
<feature type="chain" id="PRO_0000125195" description="Large ribosomal subunit protein uL22">
    <location>
        <begin position="1"/>
        <end position="110"/>
    </location>
</feature>
<proteinExistence type="inferred from homology"/>
<accession>Q7MYF6</accession>
<name>RL22_PHOLL</name>
<organism>
    <name type="scientific">Photorhabdus laumondii subsp. laumondii (strain DSM 15139 / CIP 105565 / TT01)</name>
    <name type="common">Photorhabdus luminescens subsp. laumondii</name>
    <dbReference type="NCBI Taxonomy" id="243265"/>
    <lineage>
        <taxon>Bacteria</taxon>
        <taxon>Pseudomonadati</taxon>
        <taxon>Pseudomonadota</taxon>
        <taxon>Gammaproteobacteria</taxon>
        <taxon>Enterobacterales</taxon>
        <taxon>Morganellaceae</taxon>
        <taxon>Photorhabdus</taxon>
    </lineage>
</organism>